<dbReference type="EMBL" id="CP000410">
    <property type="protein sequence ID" value="ABJ54301.1"/>
    <property type="molecule type" value="Genomic_DNA"/>
</dbReference>
<dbReference type="RefSeq" id="WP_000351907.1">
    <property type="nucleotide sequence ID" value="NZ_JAMLJR010000019.1"/>
</dbReference>
<dbReference type="SMR" id="Q04IT2"/>
<dbReference type="PaxDb" id="373153-SPD_1656"/>
<dbReference type="KEGG" id="spd:SPD_1656"/>
<dbReference type="eggNOG" id="COG1354">
    <property type="taxonomic scope" value="Bacteria"/>
</dbReference>
<dbReference type="HOGENOM" id="CLU_038686_3_3_9"/>
<dbReference type="BioCyc" id="SPNE373153:G1G6V-1790-MONOMER"/>
<dbReference type="Proteomes" id="UP000001452">
    <property type="component" value="Chromosome"/>
</dbReference>
<dbReference type="GO" id="GO:0005737">
    <property type="term" value="C:cytoplasm"/>
    <property type="evidence" value="ECO:0007669"/>
    <property type="project" value="UniProtKB-SubCell"/>
</dbReference>
<dbReference type="GO" id="GO:0051301">
    <property type="term" value="P:cell division"/>
    <property type="evidence" value="ECO:0007669"/>
    <property type="project" value="UniProtKB-KW"/>
</dbReference>
<dbReference type="GO" id="GO:0007059">
    <property type="term" value="P:chromosome segregation"/>
    <property type="evidence" value="ECO:0007669"/>
    <property type="project" value="UniProtKB-UniRule"/>
</dbReference>
<dbReference type="GO" id="GO:0006260">
    <property type="term" value="P:DNA replication"/>
    <property type="evidence" value="ECO:0007669"/>
    <property type="project" value="UniProtKB-UniRule"/>
</dbReference>
<dbReference type="Gene3D" id="6.10.250.2410">
    <property type="match status" value="1"/>
</dbReference>
<dbReference type="Gene3D" id="1.10.10.580">
    <property type="entry name" value="Structural maintenance of chromosome 1. Chain E"/>
    <property type="match status" value="1"/>
</dbReference>
<dbReference type="HAMAP" id="MF_01805">
    <property type="entry name" value="ScpA"/>
    <property type="match status" value="1"/>
</dbReference>
<dbReference type="InterPro" id="IPR003768">
    <property type="entry name" value="ScpA"/>
</dbReference>
<dbReference type="InterPro" id="IPR023093">
    <property type="entry name" value="ScpA-like_C"/>
</dbReference>
<dbReference type="NCBIfam" id="NF000993">
    <property type="entry name" value="PRK00104.1-2"/>
    <property type="match status" value="1"/>
</dbReference>
<dbReference type="PANTHER" id="PTHR33969">
    <property type="entry name" value="SEGREGATION AND CONDENSATION PROTEIN A"/>
    <property type="match status" value="1"/>
</dbReference>
<dbReference type="PANTHER" id="PTHR33969:SF2">
    <property type="entry name" value="SEGREGATION AND CONDENSATION PROTEIN A"/>
    <property type="match status" value="1"/>
</dbReference>
<dbReference type="Pfam" id="PF02616">
    <property type="entry name" value="SMC_ScpA"/>
    <property type="match status" value="1"/>
</dbReference>
<name>SCPA_STRP2</name>
<sequence>MDIKLKDFEGPLDLLLHLVSKYQMDIYDVPITEVIEQYLAYVSTLQAMRLEVTGEYMVMASQLMLIKSRKLLPKVAEVTDLGDDLEQDLLSQIEEYRKFKLLGEHLEAKHQERAQYYSKAPTELIYEDAELVHDKTTIDLFLAFSNILAKKKEEFAQNHTTILRDEYKIEDMMIIVKESLIGRDQLRLQDLFKEAQNVQEVITLFLATLELIKTQELILVQEESFGDIYLMEKKEESQVPQS</sequence>
<gene>
    <name evidence="1" type="primary">scpA</name>
    <name type="ordered locus">SPD_1656</name>
</gene>
<organism>
    <name type="scientific">Streptococcus pneumoniae serotype 2 (strain D39 / NCTC 7466)</name>
    <dbReference type="NCBI Taxonomy" id="373153"/>
    <lineage>
        <taxon>Bacteria</taxon>
        <taxon>Bacillati</taxon>
        <taxon>Bacillota</taxon>
        <taxon>Bacilli</taxon>
        <taxon>Lactobacillales</taxon>
        <taxon>Streptococcaceae</taxon>
        <taxon>Streptococcus</taxon>
    </lineage>
</organism>
<reference key="1">
    <citation type="journal article" date="2007" name="J. Bacteriol.">
        <title>Genome sequence of Avery's virulent serotype 2 strain D39 of Streptococcus pneumoniae and comparison with that of unencapsulated laboratory strain R6.</title>
        <authorList>
            <person name="Lanie J.A."/>
            <person name="Ng W.-L."/>
            <person name="Kazmierczak K.M."/>
            <person name="Andrzejewski T.M."/>
            <person name="Davidsen T.M."/>
            <person name="Wayne K.J."/>
            <person name="Tettelin H."/>
            <person name="Glass J.I."/>
            <person name="Winkler M.E."/>
        </authorList>
    </citation>
    <scope>NUCLEOTIDE SEQUENCE [LARGE SCALE GENOMIC DNA]</scope>
    <source>
        <strain>D39 / NCTC 7466</strain>
    </source>
</reference>
<protein>
    <recommendedName>
        <fullName evidence="1">Segregation and condensation protein A</fullName>
    </recommendedName>
</protein>
<comment type="function">
    <text evidence="1">Participates in chromosomal partition during cell division. May act via the formation of a condensin-like complex containing Smc and ScpB that pull DNA away from mid-cell into both cell halves.</text>
</comment>
<comment type="subunit">
    <text evidence="1">Component of a cohesin-like complex composed of ScpA, ScpB and the Smc homodimer, in which ScpA and ScpB bind to the head domain of Smc. The presence of the three proteins is required for the association of the complex with DNA.</text>
</comment>
<comment type="subcellular location">
    <subcellularLocation>
        <location evidence="1">Cytoplasm</location>
    </subcellularLocation>
    <text evidence="1">Associated with two foci at the outer edges of the nucleoid region in young cells, and at four foci within both cell halves in older cells.</text>
</comment>
<comment type="similarity">
    <text evidence="1">Belongs to the ScpA family.</text>
</comment>
<keyword id="KW-0131">Cell cycle</keyword>
<keyword id="KW-0132">Cell division</keyword>
<keyword id="KW-0159">Chromosome partition</keyword>
<keyword id="KW-0963">Cytoplasm</keyword>
<keyword id="KW-1185">Reference proteome</keyword>
<feature type="chain" id="PRO_1000069979" description="Segregation and condensation protein A">
    <location>
        <begin position="1"/>
        <end position="242"/>
    </location>
</feature>
<accession>Q04IT2</accession>
<evidence type="ECO:0000255" key="1">
    <source>
        <dbReference type="HAMAP-Rule" id="MF_01805"/>
    </source>
</evidence>
<proteinExistence type="inferred from homology"/>